<proteinExistence type="inferred from homology"/>
<accession>A6T4F4</accession>
<dbReference type="EMBL" id="CP000647">
    <property type="protein sequence ID" value="ABR75475.1"/>
    <property type="molecule type" value="Genomic_DNA"/>
</dbReference>
<dbReference type="RefSeq" id="WP_004146997.1">
    <property type="nucleotide sequence ID" value="NC_009648.1"/>
</dbReference>
<dbReference type="SMR" id="A6T4F4"/>
<dbReference type="STRING" id="272620.KPN_00014"/>
<dbReference type="jPOST" id="A6T4F4"/>
<dbReference type="PaxDb" id="272620-KPN_00014"/>
<dbReference type="EnsemblBacteria" id="ABR75475">
    <property type="protein sequence ID" value="ABR75475"/>
    <property type="gene ID" value="KPN_00014"/>
</dbReference>
<dbReference type="KEGG" id="kpn:KPN_00014"/>
<dbReference type="HOGENOM" id="CLU_005965_2_1_6"/>
<dbReference type="Proteomes" id="UP000000265">
    <property type="component" value="Chromosome"/>
</dbReference>
<dbReference type="GO" id="GO:0005524">
    <property type="term" value="F:ATP binding"/>
    <property type="evidence" value="ECO:0007669"/>
    <property type="project" value="UniProtKB-UniRule"/>
</dbReference>
<dbReference type="GO" id="GO:0140662">
    <property type="term" value="F:ATP-dependent protein folding chaperone"/>
    <property type="evidence" value="ECO:0007669"/>
    <property type="project" value="InterPro"/>
</dbReference>
<dbReference type="GO" id="GO:0051082">
    <property type="term" value="F:unfolded protein binding"/>
    <property type="evidence" value="ECO:0007669"/>
    <property type="project" value="InterPro"/>
</dbReference>
<dbReference type="CDD" id="cd10234">
    <property type="entry name" value="ASKHA_NBD_HSP70_DnaK-like"/>
    <property type="match status" value="1"/>
</dbReference>
<dbReference type="FunFam" id="2.60.34.10:FF:000014">
    <property type="entry name" value="Chaperone protein DnaK HSP70"/>
    <property type="match status" value="1"/>
</dbReference>
<dbReference type="FunFam" id="1.20.1270.10:FF:000001">
    <property type="entry name" value="Molecular chaperone DnaK"/>
    <property type="match status" value="1"/>
</dbReference>
<dbReference type="FunFam" id="3.30.420.40:FF:000004">
    <property type="entry name" value="Molecular chaperone DnaK"/>
    <property type="match status" value="1"/>
</dbReference>
<dbReference type="FunFam" id="3.90.640.10:FF:000003">
    <property type="entry name" value="Molecular chaperone DnaK"/>
    <property type="match status" value="1"/>
</dbReference>
<dbReference type="Gene3D" id="1.20.1270.10">
    <property type="match status" value="1"/>
</dbReference>
<dbReference type="Gene3D" id="3.30.420.40">
    <property type="match status" value="2"/>
</dbReference>
<dbReference type="Gene3D" id="3.90.640.10">
    <property type="entry name" value="Actin, Chain A, domain 4"/>
    <property type="match status" value="1"/>
</dbReference>
<dbReference type="Gene3D" id="2.60.34.10">
    <property type="entry name" value="Substrate Binding Domain Of DNAk, Chain A, domain 1"/>
    <property type="match status" value="1"/>
</dbReference>
<dbReference type="HAMAP" id="MF_00332">
    <property type="entry name" value="DnaK"/>
    <property type="match status" value="1"/>
</dbReference>
<dbReference type="InterPro" id="IPR043129">
    <property type="entry name" value="ATPase_NBD"/>
</dbReference>
<dbReference type="InterPro" id="IPR012725">
    <property type="entry name" value="Chaperone_DnaK"/>
</dbReference>
<dbReference type="InterPro" id="IPR018181">
    <property type="entry name" value="Heat_shock_70_CS"/>
</dbReference>
<dbReference type="InterPro" id="IPR029048">
    <property type="entry name" value="HSP70_C_sf"/>
</dbReference>
<dbReference type="InterPro" id="IPR029047">
    <property type="entry name" value="HSP70_peptide-bd_sf"/>
</dbReference>
<dbReference type="InterPro" id="IPR013126">
    <property type="entry name" value="Hsp_70_fam"/>
</dbReference>
<dbReference type="NCBIfam" id="NF001413">
    <property type="entry name" value="PRK00290.1"/>
    <property type="match status" value="1"/>
</dbReference>
<dbReference type="NCBIfam" id="NF003520">
    <property type="entry name" value="PRK05183.1"/>
    <property type="match status" value="1"/>
</dbReference>
<dbReference type="NCBIfam" id="TIGR02350">
    <property type="entry name" value="prok_dnaK"/>
    <property type="match status" value="1"/>
</dbReference>
<dbReference type="PANTHER" id="PTHR19375">
    <property type="entry name" value="HEAT SHOCK PROTEIN 70KDA"/>
    <property type="match status" value="1"/>
</dbReference>
<dbReference type="Pfam" id="PF00012">
    <property type="entry name" value="HSP70"/>
    <property type="match status" value="1"/>
</dbReference>
<dbReference type="PRINTS" id="PR00301">
    <property type="entry name" value="HEATSHOCK70"/>
</dbReference>
<dbReference type="SUPFAM" id="SSF53067">
    <property type="entry name" value="Actin-like ATPase domain"/>
    <property type="match status" value="2"/>
</dbReference>
<dbReference type="SUPFAM" id="SSF100934">
    <property type="entry name" value="Heat shock protein 70kD (HSP70), C-terminal subdomain"/>
    <property type="match status" value="1"/>
</dbReference>
<dbReference type="SUPFAM" id="SSF100920">
    <property type="entry name" value="Heat shock protein 70kD (HSP70), peptide-binding domain"/>
    <property type="match status" value="1"/>
</dbReference>
<dbReference type="PROSITE" id="PS00297">
    <property type="entry name" value="HSP70_1"/>
    <property type="match status" value="1"/>
</dbReference>
<dbReference type="PROSITE" id="PS00329">
    <property type="entry name" value="HSP70_2"/>
    <property type="match status" value="1"/>
</dbReference>
<dbReference type="PROSITE" id="PS01036">
    <property type="entry name" value="HSP70_3"/>
    <property type="match status" value="1"/>
</dbReference>
<feature type="chain" id="PRO_1000059583" description="Chaperone protein DnaK">
    <location>
        <begin position="1"/>
        <end position="638"/>
    </location>
</feature>
<feature type="region of interest" description="Disordered" evidence="2">
    <location>
        <begin position="599"/>
        <end position="638"/>
    </location>
</feature>
<feature type="compositionally biased region" description="Low complexity" evidence="2">
    <location>
        <begin position="602"/>
        <end position="620"/>
    </location>
</feature>
<feature type="modified residue" description="Phosphothreonine; by autocatalysis" evidence="1">
    <location>
        <position position="199"/>
    </location>
</feature>
<evidence type="ECO:0000255" key="1">
    <source>
        <dbReference type="HAMAP-Rule" id="MF_00332"/>
    </source>
</evidence>
<evidence type="ECO:0000256" key="2">
    <source>
        <dbReference type="SAM" id="MobiDB-lite"/>
    </source>
</evidence>
<protein>
    <recommendedName>
        <fullName evidence="1">Chaperone protein DnaK</fullName>
    </recommendedName>
    <alternativeName>
        <fullName evidence="1">HSP70</fullName>
    </alternativeName>
    <alternativeName>
        <fullName evidence="1">Heat shock 70 kDa protein</fullName>
    </alternativeName>
    <alternativeName>
        <fullName evidence="1">Heat shock protein 70</fullName>
    </alternativeName>
</protein>
<comment type="function">
    <text evidence="1">Acts as a chaperone.</text>
</comment>
<comment type="induction">
    <text evidence="1">By stress conditions e.g. heat shock.</text>
</comment>
<comment type="similarity">
    <text evidence="1">Belongs to the heat shock protein 70 family.</text>
</comment>
<sequence>MGKIIGIDLGTTNSCVAIMDGTTARVLENAEGDRTTPSIIAYTQDGETLVGQPAKRQAVTNPQNTLFAIKRLIGRRFQDEEVQRDVSIMPYKIVAADNGDAWLDVKGTKTAPPQISAEVLKKMKKTAEDYLGEPVTEAVITVPAYFNDAQRQATKDAGRIAGLEVKRIINEPTAAALAYGLDKEVGNRTIAVYDLGGGTFDISIIEIDEVDGEKTFEVLATNGDTHLGGEDFDTRLINYLVDEFKKDQGIDLRNDPLAMQRLKEAAEKAKIELSSAQQTDVNLPYITADATGPKHMNIKVTRAKLESLVEDLVNRSIEPLKVALQDAGLSVSDINDVILVGGQTRMPMVQKKVAEFFGKEPRKDVNPDEAVAIGAAVQGGVLTGDVKDVLLLDVTPLSLGIETMGGVMTALISKNTTIPTKHSQVFSTAEDNQSAVTIHVLQGERKRASDNKSLGQFNLDGINPAPRGMPQIEVTFDIDADGILHVSAKDKNSGKEQKITIKASSGLNEEEIQKMVREAEANAESDRKFEELVQTRNQGDHLLHSTRKQVEEAGDKLPADDKTAIESALTALESSLKGEDKADIEAKMQALAQASQKLMEIAQQQHAQQQAGSADAQASNAKDDDVVDAEFEEVKDKK</sequence>
<gene>
    <name evidence="1" type="primary">dnaK</name>
    <name type="ordered locus">KPN78578_00140</name>
    <name type="ORF">KPN_00014</name>
</gene>
<organism>
    <name type="scientific">Klebsiella pneumoniae subsp. pneumoniae (strain ATCC 700721 / MGH 78578)</name>
    <dbReference type="NCBI Taxonomy" id="272620"/>
    <lineage>
        <taxon>Bacteria</taxon>
        <taxon>Pseudomonadati</taxon>
        <taxon>Pseudomonadota</taxon>
        <taxon>Gammaproteobacteria</taxon>
        <taxon>Enterobacterales</taxon>
        <taxon>Enterobacteriaceae</taxon>
        <taxon>Klebsiella/Raoultella group</taxon>
        <taxon>Klebsiella</taxon>
        <taxon>Klebsiella pneumoniae complex</taxon>
    </lineage>
</organism>
<reference key="1">
    <citation type="submission" date="2006-09" db="EMBL/GenBank/DDBJ databases">
        <authorList>
            <consortium name="The Klebsiella pneumonia Genome Sequencing Project"/>
            <person name="McClelland M."/>
            <person name="Sanderson E.K."/>
            <person name="Spieth J."/>
            <person name="Clifton W.S."/>
            <person name="Latreille P."/>
            <person name="Sabo A."/>
            <person name="Pepin K."/>
            <person name="Bhonagiri V."/>
            <person name="Porwollik S."/>
            <person name="Ali J."/>
            <person name="Wilson R.K."/>
        </authorList>
    </citation>
    <scope>NUCLEOTIDE SEQUENCE [LARGE SCALE GENOMIC DNA]</scope>
    <source>
        <strain>ATCC 700721 / MGH 78578</strain>
    </source>
</reference>
<name>DNAK_KLEP7</name>
<keyword id="KW-0067">ATP-binding</keyword>
<keyword id="KW-0143">Chaperone</keyword>
<keyword id="KW-0547">Nucleotide-binding</keyword>
<keyword id="KW-0597">Phosphoprotein</keyword>
<keyword id="KW-0346">Stress response</keyword>